<organism>
    <name type="scientific">Mycolicibacterium smegmatis (strain ATCC 700084 / mc(2)155)</name>
    <name type="common">Mycobacterium smegmatis</name>
    <dbReference type="NCBI Taxonomy" id="246196"/>
    <lineage>
        <taxon>Bacteria</taxon>
        <taxon>Bacillati</taxon>
        <taxon>Actinomycetota</taxon>
        <taxon>Actinomycetes</taxon>
        <taxon>Mycobacteriales</taxon>
        <taxon>Mycobacteriaceae</taxon>
        <taxon>Mycolicibacterium</taxon>
    </lineage>
</organism>
<feature type="chain" id="PRO_0000343833" description="Peptidoglycan D,D-transpeptidase PbpA">
    <location>
        <begin position="1"/>
        <end position="491"/>
    </location>
</feature>
<feature type="topological domain" description="Cytoplasmic" evidence="4">
    <location>
        <begin position="1"/>
        <end position="8"/>
    </location>
</feature>
<feature type="transmembrane region" description="Helical; Signal-anchor for type II membrane protein" evidence="3">
    <location>
        <begin position="9"/>
        <end position="29"/>
    </location>
</feature>
<feature type="topological domain" description="Periplasmic" evidence="4">
    <location>
        <begin position="30"/>
        <end position="491"/>
    </location>
</feature>
<feature type="region of interest" description="Transpeptidase">
    <location>
        <begin position="160"/>
        <end position="484"/>
    </location>
</feature>
<feature type="active site" description="Acyl-ester intermediate" evidence="1">
    <location>
        <position position="222"/>
    </location>
</feature>
<protein>
    <recommendedName>
        <fullName evidence="2">Peptidoglycan D,D-transpeptidase PbpA</fullName>
        <ecNumber evidence="2">3.4.16.4</ecNumber>
    </recommendedName>
    <alternativeName>
        <fullName evidence="2">Penicillin-binding protein A</fullName>
        <shortName evidence="2">PBPA</shortName>
    </alternativeName>
</protein>
<accession>A0QNG3</accession>
<accession>I7G139</accession>
<gene>
    <name type="primary">pbpA</name>
    <name type="ordered locus">MSMEG_0031</name>
    <name type="ordered locus">MSMEI_0033</name>
</gene>
<keyword id="KW-0997">Cell inner membrane</keyword>
<keyword id="KW-1003">Cell membrane</keyword>
<keyword id="KW-0133">Cell shape</keyword>
<keyword id="KW-0961">Cell wall biogenesis/degradation</keyword>
<keyword id="KW-0378">Hydrolase</keyword>
<keyword id="KW-0472">Membrane</keyword>
<keyword id="KW-0573">Peptidoglycan synthesis</keyword>
<keyword id="KW-1185">Reference proteome</keyword>
<keyword id="KW-0735">Signal-anchor</keyword>
<keyword id="KW-0812">Transmembrane</keyword>
<keyword id="KW-1133">Transmembrane helix</keyword>
<reference key="1">
    <citation type="submission" date="2006-10" db="EMBL/GenBank/DDBJ databases">
        <authorList>
            <person name="Fleischmann R.D."/>
            <person name="Dodson R.J."/>
            <person name="Haft D.H."/>
            <person name="Merkel J.S."/>
            <person name="Nelson W.C."/>
            <person name="Fraser C.M."/>
        </authorList>
    </citation>
    <scope>NUCLEOTIDE SEQUENCE [LARGE SCALE GENOMIC DNA]</scope>
    <source>
        <strain>ATCC 700084 / mc(2)155</strain>
    </source>
</reference>
<reference key="2">
    <citation type="journal article" date="2007" name="Genome Biol.">
        <title>Interrupted coding sequences in Mycobacterium smegmatis: authentic mutations or sequencing errors?</title>
        <authorList>
            <person name="Deshayes C."/>
            <person name="Perrodou E."/>
            <person name="Gallien S."/>
            <person name="Euphrasie D."/>
            <person name="Schaeffer C."/>
            <person name="Van-Dorsselaer A."/>
            <person name="Poch O."/>
            <person name="Lecompte O."/>
            <person name="Reyrat J.-M."/>
        </authorList>
    </citation>
    <scope>NUCLEOTIDE SEQUENCE [LARGE SCALE GENOMIC DNA]</scope>
    <source>
        <strain>ATCC 700084 / mc(2)155</strain>
    </source>
</reference>
<reference key="3">
    <citation type="journal article" date="2009" name="Genome Res.">
        <title>Ortho-proteogenomics: multiple proteomes investigation through orthology and a new MS-based protocol.</title>
        <authorList>
            <person name="Gallien S."/>
            <person name="Perrodou E."/>
            <person name="Carapito C."/>
            <person name="Deshayes C."/>
            <person name="Reyrat J.-M."/>
            <person name="Van Dorsselaer A."/>
            <person name="Poch O."/>
            <person name="Schaeffer C."/>
            <person name="Lecompte O."/>
        </authorList>
    </citation>
    <scope>NUCLEOTIDE SEQUENCE [LARGE SCALE GENOMIC DNA]</scope>
    <source>
        <strain>ATCC 700084 / mc(2)155</strain>
    </source>
</reference>
<reference key="4">
    <citation type="journal article" date="2006" name="Microbiology">
        <title>The serine/threonine kinase PknB of Mycobacterium tuberculosis phosphorylates PBPA, a penicillin-binding protein required for cell division.</title>
        <authorList>
            <person name="Dasgupta A."/>
            <person name="Datta P."/>
            <person name="Kundu M."/>
            <person name="Basu J."/>
        </authorList>
    </citation>
    <scope>RETRACTED PAPER</scope>
</reference>
<reference key="5">
    <citation type="journal article" date="2015" name="Microbiology">
        <authorList>
            <person name="Dasgupta A."/>
            <person name="Datta P."/>
            <person name="Kundu M."/>
            <person name="Basu J."/>
        </authorList>
    </citation>
    <scope>RETRACTION NOTICE OF PUBMED:16436437</scope>
</reference>
<name>PBPA_MYCS2</name>
<dbReference type="EC" id="3.4.16.4" evidence="2"/>
<dbReference type="EMBL" id="CP000480">
    <property type="protein sequence ID" value="ABK71213.1"/>
    <property type="molecule type" value="Genomic_DNA"/>
</dbReference>
<dbReference type="EMBL" id="CP001663">
    <property type="protein sequence ID" value="AFP36516.1"/>
    <property type="molecule type" value="Genomic_DNA"/>
</dbReference>
<dbReference type="RefSeq" id="WP_003891359.1">
    <property type="nucleotide sequence ID" value="NZ_SIJM01000001.1"/>
</dbReference>
<dbReference type="RefSeq" id="YP_884451.1">
    <property type="nucleotide sequence ID" value="NC_008596.1"/>
</dbReference>
<dbReference type="SMR" id="A0QNG3"/>
<dbReference type="STRING" id="246196.MSMEG_0031"/>
<dbReference type="PaxDb" id="246196-MSMEI_0033"/>
<dbReference type="GeneID" id="93454957"/>
<dbReference type="KEGG" id="msb:LJ00_00155"/>
<dbReference type="KEGG" id="msg:MSMEI_0033"/>
<dbReference type="KEGG" id="msm:MSMEG_0031"/>
<dbReference type="PATRIC" id="fig|246196.19.peg.29"/>
<dbReference type="eggNOG" id="COG0768">
    <property type="taxonomic scope" value="Bacteria"/>
</dbReference>
<dbReference type="OrthoDB" id="9766847at2"/>
<dbReference type="UniPathway" id="UPA00219"/>
<dbReference type="Proteomes" id="UP000000757">
    <property type="component" value="Chromosome"/>
</dbReference>
<dbReference type="Proteomes" id="UP000006158">
    <property type="component" value="Chromosome"/>
</dbReference>
<dbReference type="GO" id="GO:0005886">
    <property type="term" value="C:plasma membrane"/>
    <property type="evidence" value="ECO:0007669"/>
    <property type="project" value="UniProtKB-SubCell"/>
</dbReference>
<dbReference type="GO" id="GO:0008658">
    <property type="term" value="F:penicillin binding"/>
    <property type="evidence" value="ECO:0007669"/>
    <property type="project" value="InterPro"/>
</dbReference>
<dbReference type="GO" id="GO:0071972">
    <property type="term" value="F:peptidoglycan L,D-transpeptidase activity"/>
    <property type="evidence" value="ECO:0007669"/>
    <property type="project" value="TreeGrafter"/>
</dbReference>
<dbReference type="GO" id="GO:0009002">
    <property type="term" value="F:serine-type D-Ala-D-Ala carboxypeptidase activity"/>
    <property type="evidence" value="ECO:0007669"/>
    <property type="project" value="UniProtKB-EC"/>
</dbReference>
<dbReference type="GO" id="GO:0071555">
    <property type="term" value="P:cell wall organization"/>
    <property type="evidence" value="ECO:0007669"/>
    <property type="project" value="UniProtKB-KW"/>
</dbReference>
<dbReference type="GO" id="GO:0009252">
    <property type="term" value="P:peptidoglycan biosynthetic process"/>
    <property type="evidence" value="ECO:0007669"/>
    <property type="project" value="UniProtKB-UniPathway"/>
</dbReference>
<dbReference type="GO" id="GO:0008360">
    <property type="term" value="P:regulation of cell shape"/>
    <property type="evidence" value="ECO:0007669"/>
    <property type="project" value="UniProtKB-KW"/>
</dbReference>
<dbReference type="Gene3D" id="3.40.710.10">
    <property type="entry name" value="DD-peptidase/beta-lactamase superfamily"/>
    <property type="match status" value="1"/>
</dbReference>
<dbReference type="Gene3D" id="3.90.1310.10">
    <property type="entry name" value="Penicillin-binding protein 2a (Domain 2)"/>
    <property type="match status" value="1"/>
</dbReference>
<dbReference type="InterPro" id="IPR050515">
    <property type="entry name" value="Bact_Transpept/Beta-Lactamase"/>
</dbReference>
<dbReference type="InterPro" id="IPR012338">
    <property type="entry name" value="Beta-lactam/transpept-like"/>
</dbReference>
<dbReference type="InterPro" id="IPR054120">
    <property type="entry name" value="PBPA_dimer"/>
</dbReference>
<dbReference type="InterPro" id="IPR001460">
    <property type="entry name" value="PCN-bd_Tpept"/>
</dbReference>
<dbReference type="PANTHER" id="PTHR30627:SF24">
    <property type="entry name" value="PENICILLIN-BINDING PROTEIN 4B"/>
    <property type="match status" value="1"/>
</dbReference>
<dbReference type="PANTHER" id="PTHR30627">
    <property type="entry name" value="PEPTIDOGLYCAN D,D-TRANSPEPTIDASE"/>
    <property type="match status" value="1"/>
</dbReference>
<dbReference type="Pfam" id="PF21922">
    <property type="entry name" value="PBP_dimer_2"/>
    <property type="match status" value="1"/>
</dbReference>
<dbReference type="Pfam" id="PF00905">
    <property type="entry name" value="Transpeptidase"/>
    <property type="match status" value="1"/>
</dbReference>
<dbReference type="SUPFAM" id="SSF56601">
    <property type="entry name" value="beta-lactamase/transpeptidase-like"/>
    <property type="match status" value="1"/>
</dbReference>
<sequence>MNTSLRRVAVAIMVLIVLLLANATVTQVFAADGLRADPRNQRVLLDEYSRQRGQITAGGQLLAYSVSTDGRFRYLRVYPNPQAYAPVTGFYSLGYSSTGLERAEDAVLNGSDERLFGRRLADFFTGRDPRGGNVDTTIKPQVQQAAWDAMQNGCDGPCRGSVVALEPSTGKILAMVSAPSYDPNLLATHDLAAQADAWEKLRDDPQSPLLNRAISETYPPGSTFKVITTAAALQAGARPQTQLTSAPRTPLPDSTATLENFGGAPCGPGPTVSLQEAFAKSCNTAFVELGLSTGTDKLKAMAQAFGLDTPPPAIPLQVAESTTGPIVDAAALGMSSIGQRDVALTPLQNAQVAATIANDGIAMRPYLVESLKGPDLATISTTTPEQERRAVSPQVAATLTDLMVAAEQVTQQKGAIAGVQIASKTGTAEHGTDPRNTPPHAWYIAFAPAQDPKVAVAVLVEDGGDRLSATGGALAAPIGRATIAAALREGS</sequence>
<proteinExistence type="inferred from homology"/>
<comment type="function">
    <text evidence="2">Transpeptidase that catalyzes cross-linking of the peptidoglycan cell wall. Required for the regulation of cell length.</text>
</comment>
<comment type="catalytic activity">
    <reaction evidence="2">
        <text>Preferential cleavage: (Ac)2-L-Lys-D-Ala-|-D-Ala. Also transpeptidation of peptidyl-alanyl moieties that are N-acyl substituents of D-alanine.</text>
        <dbReference type="EC" id="3.4.16.4"/>
    </reaction>
</comment>
<comment type="pathway">
    <text evidence="2">Cell wall biogenesis; peptidoglycan biosynthesis.</text>
</comment>
<comment type="subcellular location">
    <subcellularLocation>
        <location evidence="2">Cell inner membrane</location>
        <topology evidence="3">Single-pass type II membrane protein</topology>
    </subcellularLocation>
</comment>
<comment type="similarity">
    <text evidence="4">Belongs to the transpeptidase family.</text>
</comment>
<evidence type="ECO:0000250" key="1">
    <source>
        <dbReference type="UniProtKB" id="P0AD65"/>
    </source>
</evidence>
<evidence type="ECO:0000250" key="2">
    <source>
        <dbReference type="UniProtKB" id="P9WKD1"/>
    </source>
</evidence>
<evidence type="ECO:0000255" key="3"/>
<evidence type="ECO:0000305" key="4"/>